<feature type="chain" id="PRO_0000103514" description="Dihydroxy-acid dehydratase">
    <location>
        <begin position="1"/>
        <end position="617"/>
    </location>
</feature>
<feature type="active site" description="Proton acceptor" evidence="1">
    <location>
        <position position="523"/>
    </location>
</feature>
<feature type="binding site" evidence="1">
    <location>
        <position position="82"/>
    </location>
    <ligand>
        <name>Mg(2+)</name>
        <dbReference type="ChEBI" id="CHEBI:18420"/>
    </ligand>
</feature>
<feature type="binding site" evidence="1">
    <location>
        <position position="123"/>
    </location>
    <ligand>
        <name>[2Fe-2S] cluster</name>
        <dbReference type="ChEBI" id="CHEBI:190135"/>
    </ligand>
</feature>
<feature type="binding site" evidence="1">
    <location>
        <position position="124"/>
    </location>
    <ligand>
        <name>Mg(2+)</name>
        <dbReference type="ChEBI" id="CHEBI:18420"/>
    </ligand>
</feature>
<feature type="binding site" description="via carbamate group" evidence="1">
    <location>
        <position position="125"/>
    </location>
    <ligand>
        <name>Mg(2+)</name>
        <dbReference type="ChEBI" id="CHEBI:18420"/>
    </ligand>
</feature>
<feature type="binding site" evidence="1">
    <location>
        <position position="197"/>
    </location>
    <ligand>
        <name>[2Fe-2S] cluster</name>
        <dbReference type="ChEBI" id="CHEBI:190135"/>
    </ligand>
</feature>
<feature type="binding site" evidence="1">
    <location>
        <position position="497"/>
    </location>
    <ligand>
        <name>Mg(2+)</name>
        <dbReference type="ChEBI" id="CHEBI:18420"/>
    </ligand>
</feature>
<feature type="modified residue" description="N6-carboxylysine" evidence="1">
    <location>
        <position position="125"/>
    </location>
</feature>
<feature type="sequence conflict" description="In Ref. 1; AAC35795." evidence="2" ref="1">
    <original>A</original>
    <variation>S</variation>
    <location>
        <position position="290"/>
    </location>
</feature>
<feature type="sequence conflict" description="In Ref. 1; AAC35795." evidence="2" ref="1">
    <original>R</original>
    <variation>H</variation>
    <location>
        <position position="346"/>
    </location>
</feature>
<feature type="sequence conflict" description="In Ref. 1; AAC35795." evidence="2" ref="1">
    <original>SAA</original>
    <variation>FAE</variation>
    <location>
        <begin position="592"/>
        <end position="594"/>
    </location>
</feature>
<comment type="function">
    <text evidence="1">Functions in the biosynthesis of branched-chain amino acids. Catalyzes the dehydration of (2R,3R)-2,3-dihydroxy-3-methylpentanoate (2,3-dihydroxy-3-methylvalerate) into 2-oxo-3-methylpentanoate (2-oxo-3-methylvalerate) and of (2R)-2,3-dihydroxy-3-methylbutanoate (2,3-dihydroxyisovalerate) into 2-oxo-3-methylbutanoate (2-oxoisovalerate), the penultimate precursor to L-isoleucine and L-valine, respectively.</text>
</comment>
<comment type="catalytic activity">
    <reaction evidence="1">
        <text>(2R)-2,3-dihydroxy-3-methylbutanoate = 3-methyl-2-oxobutanoate + H2O</text>
        <dbReference type="Rhea" id="RHEA:24809"/>
        <dbReference type="ChEBI" id="CHEBI:11851"/>
        <dbReference type="ChEBI" id="CHEBI:15377"/>
        <dbReference type="ChEBI" id="CHEBI:49072"/>
        <dbReference type="EC" id="4.2.1.9"/>
    </reaction>
    <physiologicalReaction direction="left-to-right" evidence="1">
        <dbReference type="Rhea" id="RHEA:24810"/>
    </physiologicalReaction>
</comment>
<comment type="catalytic activity">
    <reaction evidence="1">
        <text>(2R,3R)-2,3-dihydroxy-3-methylpentanoate = (S)-3-methyl-2-oxopentanoate + H2O</text>
        <dbReference type="Rhea" id="RHEA:27694"/>
        <dbReference type="ChEBI" id="CHEBI:15377"/>
        <dbReference type="ChEBI" id="CHEBI:35146"/>
        <dbReference type="ChEBI" id="CHEBI:49258"/>
        <dbReference type="EC" id="4.2.1.9"/>
    </reaction>
    <physiologicalReaction direction="left-to-right" evidence="1">
        <dbReference type="Rhea" id="RHEA:27695"/>
    </physiologicalReaction>
</comment>
<comment type="cofactor">
    <cofactor evidence="1">
        <name>[2Fe-2S] cluster</name>
        <dbReference type="ChEBI" id="CHEBI:190135"/>
    </cofactor>
    <text evidence="1">Binds 1 [2Fe-2S] cluster per subunit. This cluster acts as a Lewis acid cofactor.</text>
</comment>
<comment type="cofactor">
    <cofactor evidence="1">
        <name>Mg(2+)</name>
        <dbReference type="ChEBI" id="CHEBI:18420"/>
    </cofactor>
</comment>
<comment type="pathway">
    <text evidence="1">Amino-acid biosynthesis; L-isoleucine biosynthesis; L-isoleucine from 2-oxobutanoate: step 3/4.</text>
</comment>
<comment type="pathway">
    <text evidence="1">Amino-acid biosynthesis; L-valine biosynthesis; L-valine from pyruvate: step 3/4.</text>
</comment>
<comment type="subunit">
    <text evidence="1">Homodimer.</text>
</comment>
<comment type="similarity">
    <text evidence="1">Belongs to the IlvD/Edd family.</text>
</comment>
<sequence>MPELRSRTVTHGRNMAGARALMRASGVPGADIGRKPIIAVANSFTEFVPGHTHLAPVGRIVSEAVTAAGGIPREFNTIAVDDGIAMGHGGMLYSLPSRDLIADSVEYMVEAHCADALICISNCDKITPGMLNAALRLNIPTVFVSGGPMESGRATLVDGTVRTLDLVDAMSEAVNDKISDADILRIEENACPTCGSCSGMFTANSMNCLTEAIGLSLPGNGSVLATHTARKTLYENAARTVLDLTRRYYEQDDDSVLPRNIATPAAFGNAMALDIAMGGSTNTILHLLAAAQEAEVSYGLAEMDALSRSVPCLAKVAPNVAKDRTYYMEDVHRAGGIPALLGELHRGGLLNEDVHSVHSPSLADWLKTWDVRGGSPSKEAVELWHAAPGCVRSAEAFSQSERWDTLDEDAEGGCIRSVEHAYSKDGGLAVLRGNLAVDGCVVKTAGVDESIWTFEGPAVVCESQEEAVQKILTQQVKEGDVVVIRYEGPKGGPGMQEMLYPTSYLKGRGLGKACALVTDGRFSGGTSGLSIGHASPEAAAGGTIALVEDGDRIRIDIPNRSIELLVDDAELTRREQALNGVYAPKNRDRKVSAALKAYAAMATSADKGAVRDVSKLG</sequence>
<accession>O69198</accession>
<accession>Q9S6T5</accession>
<reference key="1">
    <citation type="journal article" date="1999" name="Microbiology">
        <title>End-product control of expression of branched-chain amino acid biosynthesis genes in Streptomyces coelicolor A3(2): paradoxical relationships between DNA sequence and regulatory phenotype.</title>
        <authorList>
            <person name="Craster H.L."/>
            <person name="Potter C.A."/>
            <person name="Baumberg S."/>
        </authorList>
    </citation>
    <scope>NUCLEOTIDE SEQUENCE [GENOMIC DNA]</scope>
    <source>
        <strain>A3(2) / D132</strain>
    </source>
</reference>
<reference key="2">
    <citation type="journal article" date="2002" name="Nature">
        <title>Complete genome sequence of the model actinomycete Streptomyces coelicolor A3(2).</title>
        <authorList>
            <person name="Bentley S.D."/>
            <person name="Chater K.F."/>
            <person name="Cerdeno-Tarraga A.-M."/>
            <person name="Challis G.L."/>
            <person name="Thomson N.R."/>
            <person name="James K.D."/>
            <person name="Harris D.E."/>
            <person name="Quail M.A."/>
            <person name="Kieser H."/>
            <person name="Harper D."/>
            <person name="Bateman A."/>
            <person name="Brown S."/>
            <person name="Chandra G."/>
            <person name="Chen C.W."/>
            <person name="Collins M."/>
            <person name="Cronin A."/>
            <person name="Fraser A."/>
            <person name="Goble A."/>
            <person name="Hidalgo J."/>
            <person name="Hornsby T."/>
            <person name="Howarth S."/>
            <person name="Huang C.-H."/>
            <person name="Kieser T."/>
            <person name="Larke L."/>
            <person name="Murphy L.D."/>
            <person name="Oliver K."/>
            <person name="O'Neil S."/>
            <person name="Rabbinowitsch E."/>
            <person name="Rajandream M.A."/>
            <person name="Rutherford K.M."/>
            <person name="Rutter S."/>
            <person name="Seeger K."/>
            <person name="Saunders D."/>
            <person name="Sharp S."/>
            <person name="Squares R."/>
            <person name="Squares S."/>
            <person name="Taylor K."/>
            <person name="Warren T."/>
            <person name="Wietzorrek A."/>
            <person name="Woodward J.R."/>
            <person name="Barrell B.G."/>
            <person name="Parkhill J."/>
            <person name="Hopwood D.A."/>
        </authorList>
    </citation>
    <scope>NUCLEOTIDE SEQUENCE [LARGE SCALE GENOMIC DNA]</scope>
    <source>
        <strain>ATCC BAA-471 / A3(2) / M145</strain>
    </source>
</reference>
<dbReference type="EC" id="4.2.1.9" evidence="1"/>
<dbReference type="EMBL" id="AF068843">
    <property type="protein sequence ID" value="AAC35795.1"/>
    <property type="molecule type" value="Genomic_DNA"/>
</dbReference>
<dbReference type="EMBL" id="AL939116">
    <property type="protein sequence ID" value="CAB42671.1"/>
    <property type="molecule type" value="Genomic_DNA"/>
</dbReference>
<dbReference type="PIR" id="T36294">
    <property type="entry name" value="T36294"/>
</dbReference>
<dbReference type="RefSeq" id="NP_627554.1">
    <property type="nucleotide sequence ID" value="NC_003888.3"/>
</dbReference>
<dbReference type="RefSeq" id="WP_011028925.1">
    <property type="nucleotide sequence ID" value="NZ_VNID01000023.1"/>
</dbReference>
<dbReference type="SMR" id="O69198"/>
<dbReference type="FunCoup" id="O69198">
    <property type="interactions" value="367"/>
</dbReference>
<dbReference type="STRING" id="100226.gene:17760967"/>
<dbReference type="PaxDb" id="100226-SCO3345"/>
<dbReference type="KEGG" id="sco:SCO3345"/>
<dbReference type="PATRIC" id="fig|100226.15.peg.3407"/>
<dbReference type="eggNOG" id="COG0129">
    <property type="taxonomic scope" value="Bacteria"/>
</dbReference>
<dbReference type="HOGENOM" id="CLU_014271_4_2_11"/>
<dbReference type="InParanoid" id="O69198"/>
<dbReference type="OrthoDB" id="9807077at2"/>
<dbReference type="PhylomeDB" id="O69198"/>
<dbReference type="UniPathway" id="UPA00047">
    <property type="reaction ID" value="UER00057"/>
</dbReference>
<dbReference type="UniPathway" id="UPA00049">
    <property type="reaction ID" value="UER00061"/>
</dbReference>
<dbReference type="Proteomes" id="UP000001973">
    <property type="component" value="Chromosome"/>
</dbReference>
<dbReference type="GO" id="GO:0005829">
    <property type="term" value="C:cytosol"/>
    <property type="evidence" value="ECO:0000318"/>
    <property type="project" value="GO_Central"/>
</dbReference>
<dbReference type="GO" id="GO:0051537">
    <property type="term" value="F:2 iron, 2 sulfur cluster binding"/>
    <property type="evidence" value="ECO:0007669"/>
    <property type="project" value="UniProtKB-UniRule"/>
</dbReference>
<dbReference type="GO" id="GO:0004160">
    <property type="term" value="F:dihydroxy-acid dehydratase activity"/>
    <property type="evidence" value="ECO:0007669"/>
    <property type="project" value="UniProtKB-UniRule"/>
</dbReference>
<dbReference type="GO" id="GO:0016836">
    <property type="term" value="F:hydro-lyase activity"/>
    <property type="evidence" value="ECO:0000318"/>
    <property type="project" value="GO_Central"/>
</dbReference>
<dbReference type="GO" id="GO:0000287">
    <property type="term" value="F:magnesium ion binding"/>
    <property type="evidence" value="ECO:0007669"/>
    <property type="project" value="UniProtKB-UniRule"/>
</dbReference>
<dbReference type="GO" id="GO:0009097">
    <property type="term" value="P:isoleucine biosynthetic process"/>
    <property type="evidence" value="ECO:0007669"/>
    <property type="project" value="UniProtKB-UniRule"/>
</dbReference>
<dbReference type="GO" id="GO:0009099">
    <property type="term" value="P:L-valine biosynthetic process"/>
    <property type="evidence" value="ECO:0007669"/>
    <property type="project" value="UniProtKB-UniRule"/>
</dbReference>
<dbReference type="FunFam" id="3.50.30.80:FF:000001">
    <property type="entry name" value="Dihydroxy-acid dehydratase"/>
    <property type="match status" value="1"/>
</dbReference>
<dbReference type="Gene3D" id="3.50.30.80">
    <property type="entry name" value="IlvD/EDD C-terminal domain-like"/>
    <property type="match status" value="1"/>
</dbReference>
<dbReference type="HAMAP" id="MF_00012">
    <property type="entry name" value="IlvD"/>
    <property type="match status" value="1"/>
</dbReference>
<dbReference type="InterPro" id="IPR042096">
    <property type="entry name" value="Dihydro-acid_dehy_C"/>
</dbReference>
<dbReference type="InterPro" id="IPR004404">
    <property type="entry name" value="DihydroxyA_deHydtase"/>
</dbReference>
<dbReference type="InterPro" id="IPR020558">
    <property type="entry name" value="DiOHA_6PGluconate_deHydtase_CS"/>
</dbReference>
<dbReference type="InterPro" id="IPR056740">
    <property type="entry name" value="ILV_EDD_C"/>
</dbReference>
<dbReference type="InterPro" id="IPR000581">
    <property type="entry name" value="ILV_EDD_N"/>
</dbReference>
<dbReference type="InterPro" id="IPR037237">
    <property type="entry name" value="IlvD/EDD_N"/>
</dbReference>
<dbReference type="NCBIfam" id="TIGR00110">
    <property type="entry name" value="ilvD"/>
    <property type="match status" value="1"/>
</dbReference>
<dbReference type="NCBIfam" id="NF009103">
    <property type="entry name" value="PRK12448.1"/>
    <property type="match status" value="1"/>
</dbReference>
<dbReference type="PANTHER" id="PTHR43661">
    <property type="entry name" value="D-XYLONATE DEHYDRATASE"/>
    <property type="match status" value="1"/>
</dbReference>
<dbReference type="PANTHER" id="PTHR43661:SF3">
    <property type="entry name" value="D-XYLONATE DEHYDRATASE YAGF-RELATED"/>
    <property type="match status" value="1"/>
</dbReference>
<dbReference type="Pfam" id="PF24877">
    <property type="entry name" value="ILV_EDD_C"/>
    <property type="match status" value="1"/>
</dbReference>
<dbReference type="Pfam" id="PF00920">
    <property type="entry name" value="ILVD_EDD_N"/>
    <property type="match status" value="1"/>
</dbReference>
<dbReference type="SUPFAM" id="SSF143975">
    <property type="entry name" value="IlvD/EDD N-terminal domain-like"/>
    <property type="match status" value="1"/>
</dbReference>
<dbReference type="SUPFAM" id="SSF52016">
    <property type="entry name" value="LeuD/IlvD-like"/>
    <property type="match status" value="1"/>
</dbReference>
<dbReference type="PROSITE" id="PS00886">
    <property type="entry name" value="ILVD_EDD_1"/>
    <property type="match status" value="1"/>
</dbReference>
<dbReference type="PROSITE" id="PS00887">
    <property type="entry name" value="ILVD_EDD_2"/>
    <property type="match status" value="1"/>
</dbReference>
<proteinExistence type="inferred from homology"/>
<name>ILVD_STRCO</name>
<evidence type="ECO:0000255" key="1">
    <source>
        <dbReference type="HAMAP-Rule" id="MF_00012"/>
    </source>
</evidence>
<evidence type="ECO:0000305" key="2"/>
<gene>
    <name evidence="1" type="primary">ilvD</name>
    <name type="ordered locus">SCO3345</name>
    <name type="ORF">SCE7.12c</name>
</gene>
<protein>
    <recommendedName>
        <fullName evidence="1">Dihydroxy-acid dehydratase</fullName>
        <shortName evidence="1">DAD</shortName>
        <ecNumber evidence="1">4.2.1.9</ecNumber>
    </recommendedName>
</protein>
<organism>
    <name type="scientific">Streptomyces coelicolor (strain ATCC BAA-471 / A3(2) / M145)</name>
    <dbReference type="NCBI Taxonomy" id="100226"/>
    <lineage>
        <taxon>Bacteria</taxon>
        <taxon>Bacillati</taxon>
        <taxon>Actinomycetota</taxon>
        <taxon>Actinomycetes</taxon>
        <taxon>Kitasatosporales</taxon>
        <taxon>Streptomycetaceae</taxon>
        <taxon>Streptomyces</taxon>
        <taxon>Streptomyces albidoflavus group</taxon>
    </lineage>
</organism>
<keyword id="KW-0001">2Fe-2S</keyword>
<keyword id="KW-0028">Amino-acid biosynthesis</keyword>
<keyword id="KW-0100">Branched-chain amino acid biosynthesis</keyword>
<keyword id="KW-0408">Iron</keyword>
<keyword id="KW-0411">Iron-sulfur</keyword>
<keyword id="KW-0456">Lyase</keyword>
<keyword id="KW-0460">Magnesium</keyword>
<keyword id="KW-0479">Metal-binding</keyword>
<keyword id="KW-1185">Reference proteome</keyword>